<dbReference type="EC" id="6.3.4.20" evidence="1"/>
<dbReference type="EMBL" id="CP000140">
    <property type="protein sequence ID" value="ABR45593.1"/>
    <property type="molecule type" value="Genomic_DNA"/>
</dbReference>
<dbReference type="RefSeq" id="WP_005858432.1">
    <property type="nucleotide sequence ID" value="NZ_LR215978.1"/>
</dbReference>
<dbReference type="SMR" id="A6LIS9"/>
<dbReference type="STRING" id="435591.BDI_3912"/>
<dbReference type="PaxDb" id="435591-BDI_3912"/>
<dbReference type="GeneID" id="93524059"/>
<dbReference type="KEGG" id="pdi:BDI_3912"/>
<dbReference type="eggNOG" id="COG0603">
    <property type="taxonomic scope" value="Bacteria"/>
</dbReference>
<dbReference type="HOGENOM" id="CLU_081854_0_0_10"/>
<dbReference type="BioCyc" id="PDIS435591:G1G5A-4020-MONOMER"/>
<dbReference type="UniPathway" id="UPA00391"/>
<dbReference type="Proteomes" id="UP000000566">
    <property type="component" value="Chromosome"/>
</dbReference>
<dbReference type="GO" id="GO:0005524">
    <property type="term" value="F:ATP binding"/>
    <property type="evidence" value="ECO:0007669"/>
    <property type="project" value="UniProtKB-UniRule"/>
</dbReference>
<dbReference type="GO" id="GO:0016879">
    <property type="term" value="F:ligase activity, forming carbon-nitrogen bonds"/>
    <property type="evidence" value="ECO:0007669"/>
    <property type="project" value="UniProtKB-UniRule"/>
</dbReference>
<dbReference type="GO" id="GO:0008270">
    <property type="term" value="F:zinc ion binding"/>
    <property type="evidence" value="ECO:0007669"/>
    <property type="project" value="UniProtKB-UniRule"/>
</dbReference>
<dbReference type="GO" id="GO:0008616">
    <property type="term" value="P:queuosine biosynthetic process"/>
    <property type="evidence" value="ECO:0007669"/>
    <property type="project" value="UniProtKB-UniRule"/>
</dbReference>
<dbReference type="CDD" id="cd01995">
    <property type="entry name" value="QueC-like"/>
    <property type="match status" value="1"/>
</dbReference>
<dbReference type="Gene3D" id="3.40.50.620">
    <property type="entry name" value="HUPs"/>
    <property type="match status" value="1"/>
</dbReference>
<dbReference type="HAMAP" id="MF_01633">
    <property type="entry name" value="QueC"/>
    <property type="match status" value="1"/>
</dbReference>
<dbReference type="InterPro" id="IPR018317">
    <property type="entry name" value="QueC"/>
</dbReference>
<dbReference type="InterPro" id="IPR014729">
    <property type="entry name" value="Rossmann-like_a/b/a_fold"/>
</dbReference>
<dbReference type="NCBIfam" id="TIGR00364">
    <property type="entry name" value="7-cyano-7-deazaguanine synthase QueC"/>
    <property type="match status" value="1"/>
</dbReference>
<dbReference type="PANTHER" id="PTHR42914">
    <property type="entry name" value="7-CYANO-7-DEAZAGUANINE SYNTHASE"/>
    <property type="match status" value="1"/>
</dbReference>
<dbReference type="PANTHER" id="PTHR42914:SF1">
    <property type="entry name" value="7-CYANO-7-DEAZAGUANINE SYNTHASE"/>
    <property type="match status" value="1"/>
</dbReference>
<dbReference type="Pfam" id="PF06508">
    <property type="entry name" value="QueC"/>
    <property type="match status" value="1"/>
</dbReference>
<dbReference type="PIRSF" id="PIRSF006293">
    <property type="entry name" value="ExsB"/>
    <property type="match status" value="1"/>
</dbReference>
<dbReference type="SUPFAM" id="SSF52402">
    <property type="entry name" value="Adenine nucleotide alpha hydrolases-like"/>
    <property type="match status" value="1"/>
</dbReference>
<name>QUEC_PARD8</name>
<reference key="1">
    <citation type="journal article" date="2007" name="PLoS Biol.">
        <title>Evolution of symbiotic bacteria in the distal human intestine.</title>
        <authorList>
            <person name="Xu J."/>
            <person name="Mahowald M.A."/>
            <person name="Ley R.E."/>
            <person name="Lozupone C.A."/>
            <person name="Hamady M."/>
            <person name="Martens E.C."/>
            <person name="Henrissat B."/>
            <person name="Coutinho P.M."/>
            <person name="Minx P."/>
            <person name="Latreille P."/>
            <person name="Cordum H."/>
            <person name="Van Brunt A."/>
            <person name="Kim K."/>
            <person name="Fulton R.S."/>
            <person name="Fulton L.A."/>
            <person name="Clifton S.W."/>
            <person name="Wilson R.K."/>
            <person name="Knight R.D."/>
            <person name="Gordon J.I."/>
        </authorList>
    </citation>
    <scope>NUCLEOTIDE SEQUENCE [LARGE SCALE GENOMIC DNA]</scope>
    <source>
        <strain>ATCC 8503 / DSM 20701 / CIP 104284 / JCM 5825 / NCTC 11152</strain>
    </source>
</reference>
<gene>
    <name evidence="1" type="primary">queC</name>
    <name type="ordered locus">BDI_3912</name>
</gene>
<proteinExistence type="inferred from homology"/>
<protein>
    <recommendedName>
        <fullName evidence="1">7-cyano-7-deazaguanine synthase</fullName>
        <ecNumber evidence="1">6.3.4.20</ecNumber>
    </recommendedName>
    <alternativeName>
        <fullName evidence="1">7-cyano-7-carbaguanine synthase</fullName>
    </alternativeName>
    <alternativeName>
        <fullName evidence="1">PreQ(0) synthase</fullName>
    </alternativeName>
    <alternativeName>
        <fullName evidence="1">Queuosine biosynthesis protein QueC</fullName>
    </alternativeName>
</protein>
<evidence type="ECO:0000255" key="1">
    <source>
        <dbReference type="HAMAP-Rule" id="MF_01633"/>
    </source>
</evidence>
<accession>A6LIS9</accession>
<sequence length="224" mass="25153">MKQQDAALVCFSGGQDSTTCLFWAKKHFSRVEAVCFTYGQKHSLEIEVARKIAADADVPFQLLDVSLISQLDPNCSLTNASIEMDQEKPEDSYPNTFVPGRNMVFLTFAAILARGKGIYHLVTGVSEADYSGYPDCRDTFVRSLNVTLNLAMDEQFVIHTPLMDRDKSEVWELSDELGVFDLVRTQTLTCYNGVMAEGCGHCPACKLRKDGLEKYLKRKEENQK</sequence>
<feature type="chain" id="PRO_0000336926" description="7-cyano-7-deazaguanine synthase">
    <location>
        <begin position="1"/>
        <end position="224"/>
    </location>
</feature>
<feature type="binding site" evidence="1">
    <location>
        <begin position="11"/>
        <end position="21"/>
    </location>
    <ligand>
        <name>ATP</name>
        <dbReference type="ChEBI" id="CHEBI:30616"/>
    </ligand>
</feature>
<feature type="binding site" evidence="1">
    <location>
        <position position="190"/>
    </location>
    <ligand>
        <name>Zn(2+)</name>
        <dbReference type="ChEBI" id="CHEBI:29105"/>
    </ligand>
</feature>
<feature type="binding site" evidence="1">
    <location>
        <position position="199"/>
    </location>
    <ligand>
        <name>Zn(2+)</name>
        <dbReference type="ChEBI" id="CHEBI:29105"/>
    </ligand>
</feature>
<feature type="binding site" evidence="1">
    <location>
        <position position="202"/>
    </location>
    <ligand>
        <name>Zn(2+)</name>
        <dbReference type="ChEBI" id="CHEBI:29105"/>
    </ligand>
</feature>
<feature type="binding site" evidence="1">
    <location>
        <position position="205"/>
    </location>
    <ligand>
        <name>Zn(2+)</name>
        <dbReference type="ChEBI" id="CHEBI:29105"/>
    </ligand>
</feature>
<comment type="function">
    <text evidence="1">Catalyzes the ATP-dependent conversion of 7-carboxy-7-deazaguanine (CDG) to 7-cyano-7-deazaguanine (preQ(0)).</text>
</comment>
<comment type="catalytic activity">
    <reaction evidence="1">
        <text>7-carboxy-7-deazaguanine + NH4(+) + ATP = 7-cyano-7-deazaguanine + ADP + phosphate + H2O + H(+)</text>
        <dbReference type="Rhea" id="RHEA:27982"/>
        <dbReference type="ChEBI" id="CHEBI:15377"/>
        <dbReference type="ChEBI" id="CHEBI:15378"/>
        <dbReference type="ChEBI" id="CHEBI:28938"/>
        <dbReference type="ChEBI" id="CHEBI:30616"/>
        <dbReference type="ChEBI" id="CHEBI:43474"/>
        <dbReference type="ChEBI" id="CHEBI:45075"/>
        <dbReference type="ChEBI" id="CHEBI:61036"/>
        <dbReference type="ChEBI" id="CHEBI:456216"/>
        <dbReference type="EC" id="6.3.4.20"/>
    </reaction>
</comment>
<comment type="cofactor">
    <cofactor evidence="1">
        <name>Zn(2+)</name>
        <dbReference type="ChEBI" id="CHEBI:29105"/>
    </cofactor>
    <text evidence="1">Binds 1 zinc ion per subunit.</text>
</comment>
<comment type="pathway">
    <text evidence="1">Purine metabolism; 7-cyano-7-deazaguanine biosynthesis.</text>
</comment>
<comment type="similarity">
    <text evidence="1">Belongs to the QueC family.</text>
</comment>
<organism>
    <name type="scientific">Parabacteroides distasonis (strain ATCC 8503 / DSM 20701 / CIP 104284 / JCM 5825 / NCTC 11152)</name>
    <dbReference type="NCBI Taxonomy" id="435591"/>
    <lineage>
        <taxon>Bacteria</taxon>
        <taxon>Pseudomonadati</taxon>
        <taxon>Bacteroidota</taxon>
        <taxon>Bacteroidia</taxon>
        <taxon>Bacteroidales</taxon>
        <taxon>Tannerellaceae</taxon>
        <taxon>Parabacteroides</taxon>
    </lineage>
</organism>
<keyword id="KW-0067">ATP-binding</keyword>
<keyword id="KW-0436">Ligase</keyword>
<keyword id="KW-0479">Metal-binding</keyword>
<keyword id="KW-0547">Nucleotide-binding</keyword>
<keyword id="KW-0671">Queuosine biosynthesis</keyword>
<keyword id="KW-1185">Reference proteome</keyword>
<keyword id="KW-0862">Zinc</keyword>